<proteinExistence type="evidence at protein level"/>
<reference key="1">
    <citation type="journal article" date="2013" name="PLoS Pathog.">
        <title>Deciphering the cryptic genome: genome-wide analyses of the rice pathogen Fusarium fujikuroi reveal complex regulation of secondary metabolism and novel metabolites.</title>
        <authorList>
            <person name="Wiemann P."/>
            <person name="Sieber C.M.K."/>
            <person name="von Bargen K.W."/>
            <person name="Studt L."/>
            <person name="Niehaus E.-M."/>
            <person name="Espino J.J."/>
            <person name="Huss K."/>
            <person name="Michielse C.B."/>
            <person name="Albermann S."/>
            <person name="Wagner D."/>
            <person name="Bergner S.V."/>
            <person name="Connolly L.R."/>
            <person name="Fischer A."/>
            <person name="Reuter G."/>
            <person name="Kleigrewe K."/>
            <person name="Bald T."/>
            <person name="Wingfield B.D."/>
            <person name="Ophir R."/>
            <person name="Freeman S."/>
            <person name="Hippler M."/>
            <person name="Smith K.M."/>
            <person name="Brown D.W."/>
            <person name="Proctor R.H."/>
            <person name="Muensterkoetter M."/>
            <person name="Freitag M."/>
            <person name="Humpf H.-U."/>
            <person name="Gueldener U."/>
            <person name="Tudzynski B."/>
        </authorList>
    </citation>
    <scope>NUCLEOTIDE SEQUENCE [LARGE SCALE GENOMIC DNA]</scope>
    <scope>FUNCTION</scope>
    <source>
        <strain>CBS 195.34 / IMI 58289 / NRRL A-6831</strain>
    </source>
</reference>
<reference key="2">
    <citation type="journal article" date="1998" name="Curr. Genet.">
        <title>Gibberellin biosynthesis in Gibberella fujikuroi: cloning and characterization of the copalyl diphosphate synthase gene.</title>
        <authorList>
            <person name="Tudzynski B."/>
            <person name="Kawaide H."/>
            <person name="Kamiya Y."/>
        </authorList>
    </citation>
    <scope>FUNCTION</scope>
</reference>
<reference key="3">
    <citation type="journal article" date="1998" name="Fungal Genet. Biol.">
        <title>Gibberellin biosynthetic pathway in Gibberella fujikuroi: evidence for a gene cluster.</title>
        <authorList>
            <person name="Tudzynski B."/>
            <person name="Hoelter K."/>
        </authorList>
    </citation>
    <scope>FUNCTION</scope>
</reference>
<reference key="4">
    <citation type="journal article" date="1999" name="Appl. Environ. Microbiol.">
        <title>Deletions in the gibberellin biosynthesis gene cluster of Gibberella fujikuroi by restriction enzyme-mediated integration and conventional transformation-mediated mutagenesis.</title>
        <authorList>
            <person name="Linnemannstoens P."/>
            <person name="Voss T."/>
            <person name="Hedden P."/>
            <person name="Gaskin P."/>
            <person name="Tudzynski B."/>
        </authorList>
    </citation>
    <scope>FUNCTION</scope>
</reference>
<reference key="5">
    <citation type="journal article" date="2000" name="Biosci. Biotechnol. Biochem.">
        <title>Cloning of a full-length cDNA encoding ent-kaurene synthase from Gibberella fujikuroi: functional analysis of a bifunctional diterpene cyclase.</title>
        <authorList>
            <person name="Toyomasu T."/>
            <person name="Kawaide H."/>
            <person name="Ishizaki A."/>
            <person name="Shinoda S."/>
            <person name="Otsuka M."/>
            <person name="Mitsuhashi W."/>
            <person name="Sassa T."/>
        </authorList>
    </citation>
    <scope>FUNCTION</scope>
</reference>
<reference key="6">
    <citation type="journal article" date="2001" name="Appl. Environ. Microbiol.">
        <title>The P450-4 gene of Gibberella fujikuroi encodes ent-kaurene oxidase in the gibberellin biosynthesis pathway.</title>
        <authorList>
            <person name="Tudzynski B."/>
            <person name="Hedden P."/>
            <person name="Carrera E."/>
            <person name="Gaskin P."/>
        </authorList>
    </citation>
    <scope>FUNCTION</scope>
</reference>
<reference key="7">
    <citation type="journal article" date="2001" name="Proc. Natl. Acad. Sci. U.S.A.">
        <title>The P450-1 gene of Gibberella fujikuroi encodes a multifunctional enzyme in gibberellin biosynthesis.</title>
        <authorList>
            <person name="Rojas M.C."/>
            <person name="Hedden P."/>
            <person name="Gaskin P."/>
            <person name="Tudzynski B."/>
        </authorList>
    </citation>
    <scope>FUNCTION</scope>
</reference>
<reference key="8">
    <citation type="journal article" date="2002" name="J. Biol. Chem.">
        <title>The gibberellin 20-oxidase of Gibberella fujikuroi is a multifunctional monooxygenase.</title>
        <authorList>
            <person name="Tudzynski B."/>
            <person name="Rojas M.C."/>
            <person name="Gaskin P."/>
            <person name="Hedden P."/>
        </authorList>
    </citation>
    <scope>FUNCTION</scope>
</reference>
<reference key="9">
    <citation type="journal article" date="2003" name="J. Biol. Chem.">
        <title>Characterization of the final two genes of the gibberellin biosynthesis gene cluster of Gibberella fujikuroi: des and P450-3 encode GA4 desaturase and the 13-hydroxylase, respectively.</title>
        <authorList>
            <person name="Tudzynski B."/>
            <person name="Mihlan M."/>
            <person name="Rojas M.C."/>
            <person name="Linnemannstons P."/>
            <person name="Gaskin P."/>
            <person name="Hedden P."/>
        </authorList>
    </citation>
    <scope>FUNCTION</scope>
    <scope>DISRUPTION PHENOTYPE</scope>
    <scope>CATALYTIC ACTIVITY</scope>
    <scope>PATHWAY</scope>
</reference>
<reference key="10">
    <citation type="journal article" date="2005" name="Phytochemistry">
        <title>Distribution of gibberellin biosynthetic genes and gibberellin production in the Gibberella fujikuroi species complex.</title>
        <authorList>
            <person name="Malonek S."/>
            <person name="Boemke C."/>
            <person name="Bornberg-Bauer E."/>
            <person name="Rojas M.C."/>
            <person name="Hedden P."/>
            <person name="Hopkins P."/>
            <person name="Tudzynski B."/>
        </authorList>
    </citation>
    <scope>FUNCTION</scope>
</reference>
<sequence length="342" mass="37863">MPHKDNLLESPVGKSVTATIAYHSGPALPTSPIAGVTTLQDCTQQAVAVTDIRPSVSSFTLDGNGFQVVKHTSAVGSPPYDHSSWTDPVVRKEVYDPEIIELAKSLTGAKKVMILLASSRNVPFKEPELAPPYPMPGKSSSGSKEREAIPANELPTTRAKGFQKGEEEGPVRKPHKDWGPSGAWNTLRNWSQELIDEAGDIIKAGDEAAKLPGGRAKNYQGRRWALYTTWRPLKTVKRDPMAYVDYWTADEEDGVSFWRNPPGVHGTFESDVLLTKANPKHKWYWISDQTPDEVLLMKIMDTESEKDGSEIAGGVHHCSFHLPGTEKEEVRESIETKFIAFW</sequence>
<protein>
    <recommendedName>
        <fullName evidence="12">Gibberellin cluster GA4 desaturase</fullName>
        <shortName evidence="12">DES</shortName>
        <ecNumber evidence="7">1.3.-.-</ecNumber>
    </recommendedName>
</protein>
<gene>
    <name evidence="12" type="primary">DES</name>
    <name type="ORF">FFUJ_14331</name>
</gene>
<evidence type="ECO:0000256" key="1">
    <source>
        <dbReference type="SAM" id="MobiDB-lite"/>
    </source>
</evidence>
<evidence type="ECO:0000269" key="2">
    <source>
    </source>
</evidence>
<evidence type="ECO:0000269" key="3">
    <source>
    </source>
</evidence>
<evidence type="ECO:0000269" key="4">
    <source>
    </source>
</evidence>
<evidence type="ECO:0000269" key="5">
    <source>
    </source>
</evidence>
<evidence type="ECO:0000269" key="6">
    <source>
    </source>
</evidence>
<evidence type="ECO:0000269" key="7">
    <source>
    </source>
</evidence>
<evidence type="ECO:0000269" key="8">
    <source>
    </source>
</evidence>
<evidence type="ECO:0000269" key="9">
    <source>
    </source>
</evidence>
<evidence type="ECO:0000269" key="10">
    <source>
    </source>
</evidence>
<evidence type="ECO:0000269" key="11">
    <source>
    </source>
</evidence>
<evidence type="ECO:0000303" key="12">
    <source>
    </source>
</evidence>
<evidence type="ECO:0000305" key="13"/>
<name>GA1_GIBF5</name>
<keyword id="KW-0560">Oxidoreductase</keyword>
<keyword id="KW-1185">Reference proteome</keyword>
<comment type="function">
    <text evidence="2 3 4 5 6 7 8 9 10 11">GA4 desaturase; part of the gene cluster that mediates the biosynthesis of gibberellins (GAs), diterpenoids that may provide a selective advantage during infection of the preferred host plant, rice (PubMed:10347043, PubMed:12750377, PubMed:15925394, PubMed:23825955, PubMed:9917370). Gibberellins (GAs) are diterpenoids and are synthesized via the mevalonate pathway (PubMed:12750377). Biosynthesis of the major metabolite GA3 (gibberellic acid) from geranylgeranyl diphosphate (GGPP) requires 13 steps (PubMed:12750377). The GGPP produced by the geranylgeranyl diphosphate synthase GGS2 is converted to ent-kaurene via ent-copalyldiphosphate in a two-step cyclization reaction performed by the bifunctional ent-copalyl diphosphate synthase/ent-kaurene synthase enzyme (CPS/KS) (PubMed:10803977, PubMed:12750377, PubMed:9745028). Ent-Kaurene is metabolized to GAs by a series of oxidation reactions catalyzed by cytochrome P450 monooxygenases (PubMed:12750377, PubMed:9917370). Cytochrome P450 monooxygenase P450-4 is an ent-kaurene oxidase that catalyzes the three oxidation steps between ent-kaurene and ent-kaurenoic acid (PubMed:11472927). The highly multifunctional cytochrome P450 monooxygenase P450-1 then catalyzes four steps involving oxidation at two carbon atoms, in the main pathway from ent-kaurenoic acid to GA14 via GA12-aldehyde as well as producing kaurenolides and fujenoic acids as by-products (PubMed:11320210). The cytochrome P450 monooxygenase P450-2 then converts GA14 to GA4 by removal of C-20 (PubMed:11943776). GA4 is further converted to GA7 by the GA4 desaturase DES via 1,2-desaturation before cytochrome P450 monooxygenase P450-3, a 13-hydroxylase, hydroxylates GA7 to GA3, the final product of the GA-biosynthetic pathway (PubMed:12750377).</text>
</comment>
<comment type="pathway">
    <text evidence="6">Plant hormone biosynthesis; gibberellin biosynthesis.</text>
</comment>
<comment type="disruption phenotype">
    <text evidence="7">Impairs the production of GA3 and of its immediate precursor GA7, but accumulates GA4 and GA1 (PubMed:12750377).</text>
</comment>
<comment type="similarity">
    <text evidence="13">Belongs to the asaB hydroxylase/desaturase family.</text>
</comment>
<accession>S0E2Y4</accession>
<feature type="chain" id="PRO_0000442040" description="Gibberellin cluster GA4 desaturase">
    <location>
        <begin position="1"/>
        <end position="342"/>
    </location>
</feature>
<feature type="region of interest" description="Disordered" evidence="1">
    <location>
        <begin position="127"/>
        <end position="183"/>
    </location>
</feature>
<organism>
    <name type="scientific">Gibberella fujikuroi (strain CBS 195.34 / IMI 58289 / NRRL A-6831)</name>
    <name type="common">Bakanae and foot rot disease fungus</name>
    <name type="synonym">Fusarium fujikuroi</name>
    <dbReference type="NCBI Taxonomy" id="1279085"/>
    <lineage>
        <taxon>Eukaryota</taxon>
        <taxon>Fungi</taxon>
        <taxon>Dikarya</taxon>
        <taxon>Ascomycota</taxon>
        <taxon>Pezizomycotina</taxon>
        <taxon>Sordariomycetes</taxon>
        <taxon>Hypocreomycetidae</taxon>
        <taxon>Hypocreales</taxon>
        <taxon>Nectriaceae</taxon>
        <taxon>Fusarium</taxon>
        <taxon>Fusarium fujikuroi species complex</taxon>
    </lineage>
</organism>
<dbReference type="EC" id="1.3.-.-" evidence="7"/>
<dbReference type="EMBL" id="HF679027">
    <property type="protein sequence ID" value="CCT69176.1"/>
    <property type="molecule type" value="Genomic_DNA"/>
</dbReference>
<dbReference type="SMR" id="S0E2Y4"/>
<dbReference type="STRING" id="1279085.S0E2Y4"/>
<dbReference type="VEuPathDB" id="FungiDB:FFUJ_14331"/>
<dbReference type="UniPathway" id="UPA00390"/>
<dbReference type="Proteomes" id="UP000016800">
    <property type="component" value="Chromosome 5"/>
</dbReference>
<dbReference type="GO" id="GO:0016491">
    <property type="term" value="F:oxidoreductase activity"/>
    <property type="evidence" value="ECO:0007669"/>
    <property type="project" value="UniProtKB-KW"/>
</dbReference>
<dbReference type="GO" id="GO:0009686">
    <property type="term" value="P:gibberellin biosynthetic process"/>
    <property type="evidence" value="ECO:0007669"/>
    <property type="project" value="UniProtKB-UniPathway"/>
</dbReference>
<dbReference type="InterPro" id="IPR044053">
    <property type="entry name" value="AsaB-like"/>
</dbReference>
<dbReference type="NCBIfam" id="NF041278">
    <property type="entry name" value="CmcJ_NvfI_EfuI"/>
    <property type="match status" value="1"/>
</dbReference>
<dbReference type="PANTHER" id="PTHR34598">
    <property type="entry name" value="BLL6449 PROTEIN"/>
    <property type="match status" value="1"/>
</dbReference>
<dbReference type="PANTHER" id="PTHR34598:SF3">
    <property type="entry name" value="OXIDOREDUCTASE AN1597"/>
    <property type="match status" value="1"/>
</dbReference>